<sequence>MHMKLILNLLVLLAPAAVFAAGGGHGDGHIPTSTIMFQAINLTILFAAIIYFTKDAIVSFFAGRKAAYLEAAQKSAFAREQAEKEFVDIKNKLANLDQTREENLRKAQTHAEDLKKQILEEANDVTKRIKNDAELTARLEVQRAQKELRTQLLQDSVEAARIVLTKDLGSSDQQKLQKDFINNVGV</sequence>
<protein>
    <recommendedName>
        <fullName evidence="1">ATP synthase subunit b</fullName>
    </recommendedName>
    <alternativeName>
        <fullName evidence="1">ATP synthase F(0) sector subunit b</fullName>
    </alternativeName>
    <alternativeName>
        <fullName evidence="1">ATPase subunit I</fullName>
    </alternativeName>
    <alternativeName>
        <fullName evidence="1">F-type ATPase subunit b</fullName>
        <shortName evidence="1">F-ATPase subunit b</shortName>
    </alternativeName>
</protein>
<feature type="chain" id="PRO_0000368349" description="ATP synthase subunit b">
    <location>
        <begin position="1"/>
        <end position="186"/>
    </location>
</feature>
<feature type="transmembrane region" description="Helical" evidence="1">
    <location>
        <begin position="5"/>
        <end position="25"/>
    </location>
</feature>
<comment type="function">
    <text evidence="1">F(1)F(0) ATP synthase produces ATP from ADP in the presence of a proton or sodium gradient. F-type ATPases consist of two structural domains, F(1) containing the extramembraneous catalytic core and F(0) containing the membrane proton channel, linked together by a central stalk and a peripheral stalk. During catalysis, ATP synthesis in the catalytic domain of F(1) is coupled via a rotary mechanism of the central stalk subunits to proton translocation.</text>
</comment>
<comment type="function">
    <text evidence="1">Component of the F(0) channel, it forms part of the peripheral stalk, linking F(1) to F(0).</text>
</comment>
<comment type="subunit">
    <text evidence="1">F-type ATPases have 2 components, F(1) - the catalytic core - and F(0) - the membrane proton channel. F(1) has five subunits: alpha(3), beta(3), gamma(1), delta(1), epsilon(1). F(0) has three main subunits: a(1), b(2) and c(10-14). The alpha and beta chains form an alternating ring which encloses part of the gamma chain. F(1) is attached to F(0) by a central stalk formed by the gamma and epsilon chains, while a peripheral stalk is formed by the delta and b chains.</text>
</comment>
<comment type="subcellular location">
    <subcellularLocation>
        <location evidence="1">Cell inner membrane</location>
        <topology evidence="1">Single-pass membrane protein</topology>
    </subcellularLocation>
</comment>
<comment type="similarity">
    <text evidence="1">Belongs to the ATPase B chain family.</text>
</comment>
<gene>
    <name evidence="1" type="primary">atpF</name>
    <name type="ordered locus">Bd3902</name>
</gene>
<evidence type="ECO:0000255" key="1">
    <source>
        <dbReference type="HAMAP-Rule" id="MF_01398"/>
    </source>
</evidence>
<dbReference type="EMBL" id="BX842656">
    <property type="protein sequence ID" value="CAE81256.1"/>
    <property type="molecule type" value="Genomic_DNA"/>
</dbReference>
<dbReference type="SMR" id="Q6MGM3"/>
<dbReference type="STRING" id="264462.Bd3902"/>
<dbReference type="KEGG" id="bba:Bd3902"/>
<dbReference type="eggNOG" id="COG0711">
    <property type="taxonomic scope" value="Bacteria"/>
</dbReference>
<dbReference type="HOGENOM" id="CLU_1451789_0_0_7"/>
<dbReference type="Proteomes" id="UP000008080">
    <property type="component" value="Chromosome"/>
</dbReference>
<dbReference type="GO" id="GO:0005886">
    <property type="term" value="C:plasma membrane"/>
    <property type="evidence" value="ECO:0007669"/>
    <property type="project" value="UniProtKB-SubCell"/>
</dbReference>
<dbReference type="GO" id="GO:0045259">
    <property type="term" value="C:proton-transporting ATP synthase complex"/>
    <property type="evidence" value="ECO:0007669"/>
    <property type="project" value="UniProtKB-KW"/>
</dbReference>
<dbReference type="GO" id="GO:0046933">
    <property type="term" value="F:proton-transporting ATP synthase activity, rotational mechanism"/>
    <property type="evidence" value="ECO:0007669"/>
    <property type="project" value="UniProtKB-UniRule"/>
</dbReference>
<dbReference type="CDD" id="cd06503">
    <property type="entry name" value="ATP-synt_Fo_b"/>
    <property type="match status" value="1"/>
</dbReference>
<dbReference type="HAMAP" id="MF_01398">
    <property type="entry name" value="ATP_synth_b_bprime"/>
    <property type="match status" value="1"/>
</dbReference>
<dbReference type="InterPro" id="IPR002146">
    <property type="entry name" value="ATP_synth_b/b'su_bac/chlpt"/>
</dbReference>
<dbReference type="PANTHER" id="PTHR34264">
    <property type="entry name" value="ATP SYNTHASE SUBUNIT B, CHLOROPLASTIC"/>
    <property type="match status" value="1"/>
</dbReference>
<dbReference type="PANTHER" id="PTHR34264:SF3">
    <property type="entry name" value="ATP SYNTHASE SUBUNIT B, CHLOROPLASTIC"/>
    <property type="match status" value="1"/>
</dbReference>
<dbReference type="Pfam" id="PF00430">
    <property type="entry name" value="ATP-synt_B"/>
    <property type="match status" value="1"/>
</dbReference>
<keyword id="KW-0066">ATP synthesis</keyword>
<keyword id="KW-0997">Cell inner membrane</keyword>
<keyword id="KW-1003">Cell membrane</keyword>
<keyword id="KW-0138">CF(0)</keyword>
<keyword id="KW-0375">Hydrogen ion transport</keyword>
<keyword id="KW-0406">Ion transport</keyword>
<keyword id="KW-0472">Membrane</keyword>
<keyword id="KW-1185">Reference proteome</keyword>
<keyword id="KW-0812">Transmembrane</keyword>
<keyword id="KW-1133">Transmembrane helix</keyword>
<keyword id="KW-0813">Transport</keyword>
<organism>
    <name type="scientific">Bdellovibrio bacteriovorus (strain ATCC 15356 / DSM 50701 / NCIMB 9529 / HD100)</name>
    <dbReference type="NCBI Taxonomy" id="264462"/>
    <lineage>
        <taxon>Bacteria</taxon>
        <taxon>Pseudomonadati</taxon>
        <taxon>Bdellovibrionota</taxon>
        <taxon>Bdellovibrionia</taxon>
        <taxon>Bdellovibrionales</taxon>
        <taxon>Pseudobdellovibrionaceae</taxon>
        <taxon>Bdellovibrio</taxon>
    </lineage>
</organism>
<reference key="1">
    <citation type="journal article" date="2004" name="Science">
        <title>A predator unmasked: life cycle of Bdellovibrio bacteriovorus from a genomic perspective.</title>
        <authorList>
            <person name="Rendulic S."/>
            <person name="Jagtap P."/>
            <person name="Rosinus A."/>
            <person name="Eppinger M."/>
            <person name="Baar C."/>
            <person name="Lanz C."/>
            <person name="Keller H."/>
            <person name="Lambert C."/>
            <person name="Evans K.J."/>
            <person name="Goesmann A."/>
            <person name="Meyer F."/>
            <person name="Sockett R.E."/>
            <person name="Schuster S.C."/>
        </authorList>
    </citation>
    <scope>NUCLEOTIDE SEQUENCE [LARGE SCALE GENOMIC DNA]</scope>
    <source>
        <strain>ATCC 15356 / DSM 50701 / NCIMB 9529 / HD100</strain>
    </source>
</reference>
<proteinExistence type="inferred from homology"/>
<name>ATPF_BDEBA</name>
<accession>Q6MGM3</accession>